<accession>Q1JHF5</accession>
<name>FENR_STRPD</name>
<keyword id="KW-0274">FAD</keyword>
<keyword id="KW-0285">Flavoprotein</keyword>
<keyword id="KW-0521">NADP</keyword>
<keyword id="KW-0560">Oxidoreductase</keyword>
<feature type="chain" id="PRO_0000364966" description="Ferredoxin--NADP reductase">
    <location>
        <begin position="1"/>
        <end position="330"/>
    </location>
</feature>
<feature type="binding site" evidence="1">
    <location>
        <position position="35"/>
    </location>
    <ligand>
        <name>FAD</name>
        <dbReference type="ChEBI" id="CHEBI:57692"/>
    </ligand>
</feature>
<feature type="binding site" evidence="1">
    <location>
        <position position="43"/>
    </location>
    <ligand>
        <name>FAD</name>
        <dbReference type="ChEBI" id="CHEBI:57692"/>
    </ligand>
</feature>
<feature type="binding site" evidence="1">
    <location>
        <position position="48"/>
    </location>
    <ligand>
        <name>FAD</name>
        <dbReference type="ChEBI" id="CHEBI:57692"/>
    </ligand>
</feature>
<feature type="binding site" evidence="1">
    <location>
        <position position="90"/>
    </location>
    <ligand>
        <name>FAD</name>
        <dbReference type="ChEBI" id="CHEBI:57692"/>
    </ligand>
</feature>
<feature type="binding site" evidence="1">
    <location>
        <position position="123"/>
    </location>
    <ligand>
        <name>FAD</name>
        <dbReference type="ChEBI" id="CHEBI:57692"/>
    </ligand>
</feature>
<feature type="binding site" evidence="1">
    <location>
        <position position="285"/>
    </location>
    <ligand>
        <name>FAD</name>
        <dbReference type="ChEBI" id="CHEBI:57692"/>
    </ligand>
</feature>
<feature type="binding site" evidence="1">
    <location>
        <position position="326"/>
    </location>
    <ligand>
        <name>FAD</name>
        <dbReference type="ChEBI" id="CHEBI:57692"/>
    </ligand>
</feature>
<protein>
    <recommendedName>
        <fullName evidence="1">Ferredoxin--NADP reductase</fullName>
        <shortName evidence="1">FNR</shortName>
        <shortName evidence="1">Fd-NADP(+) reductase</shortName>
        <ecNumber evidence="1">1.18.1.2</ecNumber>
    </recommendedName>
</protein>
<reference key="1">
    <citation type="journal article" date="2006" name="Proc. Natl. Acad. Sci. U.S.A.">
        <title>Molecular genetic anatomy of inter- and intraserotype variation in the human bacterial pathogen group A Streptococcus.</title>
        <authorList>
            <person name="Beres S.B."/>
            <person name="Richter E.W."/>
            <person name="Nagiec M.J."/>
            <person name="Sumby P."/>
            <person name="Porcella S.F."/>
            <person name="DeLeo F.R."/>
            <person name="Musser J.M."/>
        </authorList>
    </citation>
    <scope>NUCLEOTIDE SEQUENCE [LARGE SCALE GENOMIC DNA]</scope>
    <source>
        <strain>MGAS10270</strain>
    </source>
</reference>
<comment type="catalytic activity">
    <reaction evidence="1">
        <text>2 reduced [2Fe-2S]-[ferredoxin] + NADP(+) + H(+) = 2 oxidized [2Fe-2S]-[ferredoxin] + NADPH</text>
        <dbReference type="Rhea" id="RHEA:20125"/>
        <dbReference type="Rhea" id="RHEA-COMP:10000"/>
        <dbReference type="Rhea" id="RHEA-COMP:10001"/>
        <dbReference type="ChEBI" id="CHEBI:15378"/>
        <dbReference type="ChEBI" id="CHEBI:33737"/>
        <dbReference type="ChEBI" id="CHEBI:33738"/>
        <dbReference type="ChEBI" id="CHEBI:57783"/>
        <dbReference type="ChEBI" id="CHEBI:58349"/>
        <dbReference type="EC" id="1.18.1.2"/>
    </reaction>
</comment>
<comment type="cofactor">
    <cofactor evidence="1">
        <name>FAD</name>
        <dbReference type="ChEBI" id="CHEBI:57692"/>
    </cofactor>
    <text evidence="1">Binds 1 FAD per subunit.</text>
</comment>
<comment type="subunit">
    <text evidence="1">Homodimer.</text>
</comment>
<comment type="similarity">
    <text evidence="1">Belongs to the ferredoxin--NADP reductase type 2 family.</text>
</comment>
<dbReference type="EC" id="1.18.1.2" evidence="1"/>
<dbReference type="EMBL" id="CP000260">
    <property type="protein sequence ID" value="ABF33781.1"/>
    <property type="molecule type" value="Genomic_DNA"/>
</dbReference>
<dbReference type="SMR" id="Q1JHF5"/>
<dbReference type="KEGG" id="sph:MGAS10270_Spy0716"/>
<dbReference type="HOGENOM" id="CLU_031864_5_5_9"/>
<dbReference type="Proteomes" id="UP000002436">
    <property type="component" value="Chromosome"/>
</dbReference>
<dbReference type="GO" id="GO:0004324">
    <property type="term" value="F:ferredoxin-NADP+ reductase activity"/>
    <property type="evidence" value="ECO:0007669"/>
    <property type="project" value="UniProtKB-UniRule"/>
</dbReference>
<dbReference type="GO" id="GO:0050660">
    <property type="term" value="F:flavin adenine dinucleotide binding"/>
    <property type="evidence" value="ECO:0007669"/>
    <property type="project" value="UniProtKB-UniRule"/>
</dbReference>
<dbReference type="GO" id="GO:0050661">
    <property type="term" value="F:NADP binding"/>
    <property type="evidence" value="ECO:0007669"/>
    <property type="project" value="UniProtKB-UniRule"/>
</dbReference>
<dbReference type="Gene3D" id="3.50.50.60">
    <property type="entry name" value="FAD/NAD(P)-binding domain"/>
    <property type="match status" value="2"/>
</dbReference>
<dbReference type="HAMAP" id="MF_01685">
    <property type="entry name" value="FENR2"/>
    <property type="match status" value="1"/>
</dbReference>
<dbReference type="InterPro" id="IPR036188">
    <property type="entry name" value="FAD/NAD-bd_sf"/>
</dbReference>
<dbReference type="InterPro" id="IPR023753">
    <property type="entry name" value="FAD/NAD-binding_dom"/>
</dbReference>
<dbReference type="InterPro" id="IPR022890">
    <property type="entry name" value="Fd--NADP_Rdtase_type_2"/>
</dbReference>
<dbReference type="InterPro" id="IPR050097">
    <property type="entry name" value="Ferredoxin-NADP_redctase_2"/>
</dbReference>
<dbReference type="PANTHER" id="PTHR48105">
    <property type="entry name" value="THIOREDOXIN REDUCTASE 1-RELATED-RELATED"/>
    <property type="match status" value="1"/>
</dbReference>
<dbReference type="Pfam" id="PF07992">
    <property type="entry name" value="Pyr_redox_2"/>
    <property type="match status" value="1"/>
</dbReference>
<dbReference type="PRINTS" id="PR00368">
    <property type="entry name" value="FADPNR"/>
</dbReference>
<dbReference type="PRINTS" id="PR00469">
    <property type="entry name" value="PNDRDTASEII"/>
</dbReference>
<dbReference type="SUPFAM" id="SSF51905">
    <property type="entry name" value="FAD/NAD(P)-binding domain"/>
    <property type="match status" value="1"/>
</dbReference>
<proteinExistence type="inferred from homology"/>
<gene>
    <name type="ordered locus">MGAS10270_Spy0716</name>
</gene>
<sequence length="330" mass="36104">MKDKAYDITIIGGGPIGLFAAFYAGLRGVTVKIIESLSELGGQPAILYPEKMIYDIPAYPSLTGAELTENLIKQLSRFEDRTTICLKEEVLTFDKVKGGFSIRTNKAEHFSKAIIIACGNGAFAPRTLGLESEENFADHNLFYNVHQLDQFAGQKVVICGGGDSAVDWALALEDIAESVTVVHRRDAFRAHEHSVELLKASTVNLLTPYVPKALKGIGNLAEKLVIQKVKEDEVLELELDSLIVSFGFSTSNKNLKNWNLDYKRSSITVSPLFQTSQEGIFAIGDAAAYKGKVDLIATGFGEAPTAVNQAINYIYPDRDNRVVHSTSLID</sequence>
<organism>
    <name type="scientific">Streptococcus pyogenes serotype M2 (strain MGAS10270)</name>
    <dbReference type="NCBI Taxonomy" id="370552"/>
    <lineage>
        <taxon>Bacteria</taxon>
        <taxon>Bacillati</taxon>
        <taxon>Bacillota</taxon>
        <taxon>Bacilli</taxon>
        <taxon>Lactobacillales</taxon>
        <taxon>Streptococcaceae</taxon>
        <taxon>Streptococcus</taxon>
    </lineage>
</organism>
<evidence type="ECO:0000255" key="1">
    <source>
        <dbReference type="HAMAP-Rule" id="MF_01685"/>
    </source>
</evidence>